<proteinExistence type="inferred from homology"/>
<sequence length="361" mass="40936">MVSLREIRAHNAGLRDAWAGHRHVSLFVGATKGIGLATIMELIQRIDEPTVYIVCRSTAQFAQRIAELQRLNRRAKLVALYGQISLLSEVDRICNLVLRKESQLDLLFMSPGYLPNGHPSYTPEGLEELASLAYYCRLRFTVNLLPLLERTAKTNYPDEPSNRRPRVFSVLNGGNERALPFVPEDLQSEKSYTMLNHVAHTTLMNTLALEHLAHKKPSVDFVHESPGKVQTDIVASFLQSPERTRSRLVLWRWLKGMLMLVLQAVLLPVFYVVAMPLAESGERRLYEATVDLSQQWQKQLQSPPYNGIVAAPGFYRMKHTSDIVMDDTVLQAYRALGMPERAWEHTMAVFRSVLDKGSGKK</sequence>
<accession>B8NJH0</accession>
<protein>
    <recommendedName>
        <fullName evidence="3">Oxidoreductase lepF</fullName>
        <ecNumber evidence="6">1.-.-.-</ecNumber>
    </recommendedName>
    <alternativeName>
        <fullName evidence="3">Leporins biosynthesis protein F</fullName>
    </alternativeName>
</protein>
<name>LEPF_ASPFN</name>
<keyword id="KW-0472">Membrane</keyword>
<keyword id="KW-0560">Oxidoreductase</keyword>
<keyword id="KW-0812">Transmembrane</keyword>
<keyword id="KW-1133">Transmembrane helix</keyword>
<evidence type="ECO:0000255" key="1"/>
<evidence type="ECO:0000269" key="2">
    <source>
    </source>
</evidence>
<evidence type="ECO:0000303" key="3">
    <source>
    </source>
</evidence>
<evidence type="ECO:0000305" key="4"/>
<evidence type="ECO:0000305" key="5">
    <source>
    </source>
</evidence>
<evidence type="ECO:0000305" key="6">
    <source>
    </source>
</evidence>
<organism>
    <name type="scientific">Aspergillus flavus (strain ATCC 200026 / FGSC A1120 / IAM 13836 / NRRL 3357 / JCM 12722 / SRRC 167)</name>
    <dbReference type="NCBI Taxonomy" id="332952"/>
    <lineage>
        <taxon>Eukaryota</taxon>
        <taxon>Fungi</taxon>
        <taxon>Dikarya</taxon>
        <taxon>Ascomycota</taxon>
        <taxon>Pezizomycotina</taxon>
        <taxon>Eurotiomycetes</taxon>
        <taxon>Eurotiomycetidae</taxon>
        <taxon>Eurotiales</taxon>
        <taxon>Aspergillaceae</taxon>
        <taxon>Aspergillus</taxon>
        <taxon>Aspergillus subgen. Circumdati</taxon>
    </lineage>
</organism>
<comment type="function">
    <text evidence="2 5">Oxidoreductase; part of the gene cluster 23 that mediates the biosynthesis of a family of 2-pyridones known as leporins (PubMed:20447271, PubMed:26051490). The hybrid PKS-NRPS synthetase lepA and the enoyl reductase lepG are responsible for fusion of phenylalanine with a hexaketide and subsequent release of the stable tetramic acid precursor, pre-leporin C (PubMed:26051490). Because lepA lacks a designated enoylreductase (ER) domain, the required activity is provided the enoyl reductase lepG (PubMed:26051490). It is possible that the dehydrogenase lepF also participates in production of pre-leporin C (PubMed:26051490). Cytochrome P450 monooxygenase lepH is then required for the ring expansion step to yield leporin C (PubMed:26051490). Leporin C is then presumably further oxidized by the N-hydroxylase lepD to form leporin B (PubMed:26051490). LepI may possess a function in biosynthesis upstream of lepA (PubMed:26051490). Leporin B is further oxidized in the presence of ferric ion to give the leporin B trimer-iron chelate, but whether or not this reaction is catalyzed by an enzyme in the pathway or by ferric ion is not determined yet (PubMed:26051490).</text>
</comment>
<comment type="subcellular location">
    <subcellularLocation>
        <location evidence="1">Membrane</location>
        <topology evidence="1">Single-pass membrane protein</topology>
    </subcellularLocation>
</comment>
<comment type="disruption phenotype">
    <text evidence="2">Results in a significant reduction in leporin C and absence of detectable amounts of leporin B (PubMed:26051490).</text>
</comment>
<comment type="similarity">
    <text evidence="4">Belongs to the NmrA-type oxidoreductase family.</text>
</comment>
<gene>
    <name evidence="3" type="primary">lepF</name>
    <name type="ORF">AFLA_066910</name>
</gene>
<feature type="chain" id="PRO_0000438453" description="Oxidoreductase lepF">
    <location>
        <begin position="1"/>
        <end position="361"/>
    </location>
</feature>
<feature type="transmembrane region" description="Helical" evidence="1">
    <location>
        <begin position="257"/>
        <end position="277"/>
    </location>
</feature>
<dbReference type="EC" id="1.-.-.-" evidence="6"/>
<dbReference type="EMBL" id="EQ963479">
    <property type="protein sequence ID" value="EED49869.1"/>
    <property type="molecule type" value="Genomic_DNA"/>
</dbReference>
<dbReference type="RefSeq" id="XP_002380250.1">
    <property type="nucleotide sequence ID" value="XM_002380209.1"/>
</dbReference>
<dbReference type="SMR" id="B8NJH0"/>
<dbReference type="STRING" id="332952.B8NJH0"/>
<dbReference type="EnsemblFungi" id="EED49869">
    <property type="protein sequence ID" value="EED49869"/>
    <property type="gene ID" value="AFLA_066910"/>
</dbReference>
<dbReference type="VEuPathDB" id="FungiDB:AFLA_008628"/>
<dbReference type="HOGENOM" id="CLU_044999_0_2_1"/>
<dbReference type="OMA" id="RECNARF"/>
<dbReference type="BioCyc" id="MetaCyc:MONOMER-22098"/>
<dbReference type="GO" id="GO:0016020">
    <property type="term" value="C:membrane"/>
    <property type="evidence" value="ECO:0007669"/>
    <property type="project" value="UniProtKB-SubCell"/>
</dbReference>
<dbReference type="GO" id="GO:0016491">
    <property type="term" value="F:oxidoreductase activity"/>
    <property type="evidence" value="ECO:0007669"/>
    <property type="project" value="UniProtKB-KW"/>
</dbReference>
<dbReference type="Gene3D" id="3.40.50.720">
    <property type="entry name" value="NAD(P)-binding Rossmann-like Domain"/>
    <property type="match status" value="1"/>
</dbReference>
<dbReference type="InterPro" id="IPR036291">
    <property type="entry name" value="NAD(P)-bd_dom_sf"/>
</dbReference>
<dbReference type="InterPro" id="IPR052228">
    <property type="entry name" value="Sec_Metab_Biosynth_Oxidored"/>
</dbReference>
<dbReference type="PANTHER" id="PTHR47534:SF3">
    <property type="entry name" value="ALCOHOL DEHYDROGENASE-LIKE C-TERMINAL DOMAIN-CONTAINING PROTEIN"/>
    <property type="match status" value="1"/>
</dbReference>
<dbReference type="PANTHER" id="PTHR47534">
    <property type="entry name" value="YALI0E05731P"/>
    <property type="match status" value="1"/>
</dbReference>
<dbReference type="SUPFAM" id="SSF51735">
    <property type="entry name" value="NAD(P)-binding Rossmann-fold domains"/>
    <property type="match status" value="1"/>
</dbReference>
<reference key="1">
    <citation type="journal article" date="2015" name="Genome Announc.">
        <title>Genome sequence of Aspergillus flavus NRRL 3357, a strain that causes aflatoxin contamination of food and feed.</title>
        <authorList>
            <person name="Nierman W.C."/>
            <person name="Yu J."/>
            <person name="Fedorova-Abrams N.D."/>
            <person name="Losada L."/>
            <person name="Cleveland T.E."/>
            <person name="Bhatnagar D."/>
            <person name="Bennett J.W."/>
            <person name="Dean R."/>
            <person name="Payne G.A."/>
        </authorList>
    </citation>
    <scope>NUCLEOTIDE SEQUENCE [LARGE SCALE GENOMIC DNA]</scope>
    <source>
        <strain>ATCC 200026 / FGSC A1120 / IAM 13836 / NRRL 3357 / JCM 12722 / SRRC 167</strain>
    </source>
</reference>
<reference key="2">
    <citation type="journal article" date="2010" name="Mol. Plant Pathol.">
        <title>Beyond aflatoxin: four distinct expression patterns and functional roles associated with Aspergillus flavus secondary metabolism gene clusters.</title>
        <authorList>
            <person name="Georgianna D.R."/>
            <person name="Fedorova N.D."/>
            <person name="Burroughs J.L."/>
            <person name="Dolezal A.L."/>
            <person name="Bok J.W."/>
            <person name="Horowitz-Brown S."/>
            <person name="Woloshuk C.P."/>
            <person name="Yu J."/>
            <person name="Keller N.P."/>
            <person name="Payne G.A."/>
        </authorList>
    </citation>
    <scope>IDENTIFICATION OF THE GENE CLUSTER 23</scope>
    <scope>FUNCTION</scope>
</reference>
<reference key="3">
    <citation type="journal article" date="2015" name="Fungal Genet. Biol.">
        <title>An Aspergillus flavus secondary metabolic gene cluster containing a hybrid PKS-NRPS is necessary for synthesis of the 2-pyridones, leporins.</title>
        <authorList>
            <person name="Cary J.W."/>
            <person name="Uka V."/>
            <person name="Han Z."/>
            <person name="Buyst D."/>
            <person name="Harris-Coward P.Y."/>
            <person name="Ehrlich K.C."/>
            <person name="Wei Q."/>
            <person name="Bhatnagar D."/>
            <person name="Dowd P.F."/>
            <person name="Martens S.L."/>
            <person name="Calvo A.M."/>
            <person name="Martins J.C."/>
            <person name="Vanhaecke L."/>
            <person name="Coenye T."/>
            <person name="De Saeger S."/>
            <person name="Di Mavungu J.D."/>
        </authorList>
    </citation>
    <scope>FUNCTION</scope>
    <scope>DISRUPTION PHENOTYPE</scope>
    <scope>PATHWAY</scope>
</reference>